<feature type="chain" id="PRO_0000439407" description="Acetylpolyamine amidohydrolase 1">
    <location>
        <begin position="1"/>
        <end position="346"/>
    </location>
</feature>
<feature type="active site" description="Proton donor/acceptor" evidence="1">
    <location>
        <position position="161"/>
    </location>
</feature>
<feature type="binding site" evidence="1">
    <location>
        <position position="197"/>
    </location>
    <ligand>
        <name>Zn(2+)</name>
        <dbReference type="ChEBI" id="CHEBI:29105"/>
    </ligand>
</feature>
<feature type="binding site" evidence="1">
    <location>
        <position position="199"/>
    </location>
    <ligand>
        <name>Zn(2+)</name>
        <dbReference type="ChEBI" id="CHEBI:29105"/>
    </ligand>
</feature>
<feature type="binding site" evidence="1">
    <location>
        <position position="286"/>
    </location>
    <ligand>
        <name>Zn(2+)</name>
        <dbReference type="ChEBI" id="CHEBI:29105"/>
    </ligand>
</feature>
<feature type="site" description="Polarizes the scissile carbonyl of the substrate" evidence="1">
    <location>
        <position position="325"/>
    </location>
</feature>
<reference key="1">
    <citation type="journal article" date="2000" name="Nature">
        <title>Complete genome sequence of Pseudomonas aeruginosa PAO1, an opportunistic pathogen.</title>
        <authorList>
            <person name="Stover C.K."/>
            <person name="Pham X.-Q.T."/>
            <person name="Erwin A.L."/>
            <person name="Mizoguchi S.D."/>
            <person name="Warrener P."/>
            <person name="Hickey M.J."/>
            <person name="Brinkman F.S.L."/>
            <person name="Hufnagle W.O."/>
            <person name="Kowalik D.J."/>
            <person name="Lagrou M."/>
            <person name="Garber R.L."/>
            <person name="Goltry L."/>
            <person name="Tolentino E."/>
            <person name="Westbrock-Wadman S."/>
            <person name="Yuan Y."/>
            <person name="Brody L.L."/>
            <person name="Coulter S.N."/>
            <person name="Folger K.R."/>
            <person name="Kas A."/>
            <person name="Larbig K."/>
            <person name="Lim R.M."/>
            <person name="Smith K.A."/>
            <person name="Spencer D.H."/>
            <person name="Wong G.K.-S."/>
            <person name="Wu Z."/>
            <person name="Paulsen I.T."/>
            <person name="Reizer J."/>
            <person name="Saier M.H. Jr."/>
            <person name="Hancock R.E.W."/>
            <person name="Lory S."/>
            <person name="Olson M.V."/>
        </authorList>
    </citation>
    <scope>NUCLEOTIDE SEQUENCE [LARGE SCALE GENOMIC DNA]</scope>
    <source>
        <strain>ATCC 15692 / DSM 22644 / CIP 104116 / JCM 14847 / LMG 12228 / 1C / PRS 101 / PAO1</strain>
    </source>
</reference>
<reference key="2">
    <citation type="journal article" date="2008" name="J. Bacteriol.">
        <title>Transcriptome analysis of agmatine and putrescine catabolism in Pseudomonas aeruginosa PAO1.</title>
        <authorList>
            <person name="Chou H.T."/>
            <person name="Kwon D.H."/>
            <person name="Hegazy M."/>
            <person name="Lu C.D."/>
        </authorList>
    </citation>
    <scope>CATALYTIC ACTIVITY</scope>
    <scope>INDUCTION</scope>
    <source>
        <strain>ATCC 15692 / DSM 22644 / CIP 104116 / JCM 14847 / LMG 12228 / 1C / PRS 101 / PAO1</strain>
    </source>
</reference>
<reference key="3">
    <citation type="journal article" date="2016" name="BMC Biochem.">
        <title>Substrate specificity and function of acetylpolyamine amidohydrolases from Pseudomonas aeruginosa.</title>
        <authorList>
            <person name="Kraemer A."/>
            <person name="Herzer J."/>
            <person name="Overhage J."/>
            <person name="Meyer-Almes F.J."/>
        </authorList>
    </citation>
    <scope>FUNCTION</scope>
    <scope>CATALYTIC ACTIVITY</scope>
    <scope>SUBSTRATE SPECIFICITY</scope>
    <scope>BIOPHYSICOCHEMICAL PROPERTIES</scope>
    <scope>DISRUPTION PHENOTYPE</scope>
    <scope>PATHWAY</scope>
    <source>
        <strain>ATCC 15692 / DSM 22644 / CIP 104116 / JCM 14847 / LMG 12228 / 1C / PRS 101 / PAO1</strain>
    </source>
</reference>
<name>APAH1_PSEAE</name>
<comment type="function">
    <text evidence="3">Catalyzes the deacetylation of acetylated polyamines such as N-acetylputrescine, N-acetylcadaverine, N(1)-acetylspermine and N(1)-acetylspermidine. Plays an important role in the metabolism of acetylated polyamines in P.aeruginosa. Is involved in the degradation pathways of N-acetylputrescine and N-acetylcadaverine, that allow P.aeruginosa to utilize these acetylpolyamines as a carbon source under glucose starvation. In vitro, can also hydrolyze artificial trifluoroacetylated and acetylated lysine-derivatives.</text>
</comment>
<comment type="catalytic activity">
    <reaction evidence="2 3">
        <text>N-acetylputrescine + H2O = putrescine + acetate</text>
        <dbReference type="Rhea" id="RHEA:23412"/>
        <dbReference type="ChEBI" id="CHEBI:15377"/>
        <dbReference type="ChEBI" id="CHEBI:30089"/>
        <dbReference type="ChEBI" id="CHEBI:58263"/>
        <dbReference type="ChEBI" id="CHEBI:326268"/>
        <dbReference type="EC" id="3.5.1.62"/>
    </reaction>
</comment>
<comment type="catalytic activity">
    <reaction evidence="3">
        <text>N-acetylcadaverine + H2O = cadaverine + acetate</text>
        <dbReference type="Rhea" id="RHEA:51892"/>
        <dbReference type="ChEBI" id="CHEBI:15377"/>
        <dbReference type="ChEBI" id="CHEBI:30089"/>
        <dbReference type="ChEBI" id="CHEBI:58384"/>
        <dbReference type="ChEBI" id="CHEBI:134408"/>
    </reaction>
</comment>
<comment type="catalytic activity">
    <reaction evidence="3">
        <text>N(1)-acetylspermine + H2O = spermine + acetate</text>
        <dbReference type="Rhea" id="RHEA:51896"/>
        <dbReference type="ChEBI" id="CHEBI:15377"/>
        <dbReference type="ChEBI" id="CHEBI:30089"/>
        <dbReference type="ChEBI" id="CHEBI:45725"/>
        <dbReference type="ChEBI" id="CHEBI:58101"/>
    </reaction>
</comment>
<comment type="catalytic activity">
    <reaction evidence="3">
        <text>N(1)-acetylspermidine + H2O = spermidine + acetate</text>
        <dbReference type="Rhea" id="RHEA:51900"/>
        <dbReference type="ChEBI" id="CHEBI:15377"/>
        <dbReference type="ChEBI" id="CHEBI:30089"/>
        <dbReference type="ChEBI" id="CHEBI:57834"/>
        <dbReference type="ChEBI" id="CHEBI:58324"/>
    </reaction>
</comment>
<comment type="cofactor">
    <cofactor evidence="1">
        <name>Zn(2+)</name>
        <dbReference type="ChEBI" id="CHEBI:29105"/>
    </cofactor>
    <text evidence="1">Binds 1 zinc ion per subunit.</text>
</comment>
<comment type="biophysicochemical properties">
    <kinetics>
        <KM evidence="3">465 uM for N-acetylcadaverine</KM>
        <KM evidence="3">503 uM for N-acetylputrescine</KM>
        <KM evidence="3">223 uM for Boc-Lys(Ac)-AMC</KM>
        <KM evidence="3">84 uM for Boc-Lys(TFA)-AMC</KM>
        <Vmax evidence="3">24.5 nmol/sec/mg enzyme with N-acetylcadaverine as substrate</Vmax>
        <Vmax evidence="3">39.3 nmol/sec/mg enzyme with N-acetylputrescine as substrate</Vmax>
        <Vmax evidence="3">1.3 nmol/sec/mg enzyme with Boc-Lys(Ac)-AMC as substrate</Vmax>
        <Vmax evidence="3">5.2 nmol/sec/mg enzyme with Boc-Lys(TFA)-AMC as substrate</Vmax>
    </kinetics>
</comment>
<comment type="pathway">
    <text evidence="3">Amine and polyamine metabolism.</text>
</comment>
<comment type="subunit">
    <text evidence="1">Homodimer.</text>
</comment>
<comment type="induction">
    <text evidence="2">By exogenous acetylputrescine and agmatine, but not by putrescine.</text>
</comment>
<comment type="disruption phenotype">
    <text evidence="3">Cells lacking this gene are unable to use N-acetylcadaverine as sole carbon source for growth, and display an elongated lag-phase of approximately 6 hours before growing on N-acetylputrescine. The deletion mutant strain exhibits only marginal changes in biofilm biomass in comparison to the wild-type.</text>
</comment>
<comment type="similarity">
    <text evidence="6">Belongs to the histone deacetylase family.</text>
</comment>
<organism>
    <name type="scientific">Pseudomonas aeruginosa (strain ATCC 15692 / DSM 22644 / CIP 104116 / JCM 14847 / LMG 12228 / 1C / PRS 101 / PAO1)</name>
    <dbReference type="NCBI Taxonomy" id="208964"/>
    <lineage>
        <taxon>Bacteria</taxon>
        <taxon>Pseudomonadati</taxon>
        <taxon>Pseudomonadota</taxon>
        <taxon>Gammaproteobacteria</taxon>
        <taxon>Pseudomonadales</taxon>
        <taxon>Pseudomonadaceae</taxon>
        <taxon>Pseudomonas</taxon>
    </lineage>
</organism>
<proteinExistence type="evidence at protein level"/>
<accession>Q9I3T5</accession>
<protein>
    <recommendedName>
        <fullName evidence="5">Acetylpolyamine amidohydrolase 1</fullName>
        <shortName evidence="5">APAH 1</shortName>
        <ecNumber evidence="3">3.5.1.-</ecNumber>
    </recommendedName>
    <alternativeName>
        <fullName evidence="8">Acetylcadaverine deacetylase</fullName>
    </alternativeName>
    <alternativeName>
        <fullName evidence="8">Acetylpolyamine deacetylase</fullName>
    </alternativeName>
    <alternativeName>
        <fullName evidence="7 8">Acetylputrescine deacetylase</fullName>
        <ecNumber evidence="2 3">3.5.1.62</ecNumber>
    </alternativeName>
</protein>
<keyword id="KW-0378">Hydrolase</keyword>
<keyword id="KW-0479">Metal-binding</keyword>
<keyword id="KW-1185">Reference proteome</keyword>
<keyword id="KW-0862">Zinc</keyword>
<sequence length="346" mass="37954">MLSVYSDDHRLHFGQSELVDGKLQPCFEMPSRADTVLARVKSQNLGEVIAPKDFGREPLLRLHDAAYLDFLQGAWARWTAEGHSGDLVSTTFPGRRLRRDGPIPTALMGELGYYSFDTEAPITAGTWQAIYSSAQVALTAQEHMRQGARSAFALCRPPGHHAGGDFMGGYCFLNNAAIATQAFLDQGARRVAILDVDYHHGNGTQDIFYRRDDVLFASIHGDPRVEYPYFLGYADERGEGAGEGCNHNYPLAHGSGWDLWSAALDDACVRIAGYAPDALVISLGVDTYKEDPISQFRLDSPDYLRMGERIARLGLPTLFIMEGGYAVEAIGINAVNVLQGYEGAAR</sequence>
<dbReference type="EC" id="3.5.1.-" evidence="3"/>
<dbReference type="EC" id="3.5.1.62" evidence="2 3"/>
<dbReference type="EMBL" id="AE004091">
    <property type="protein sequence ID" value="AAG04798.1"/>
    <property type="molecule type" value="Genomic_DNA"/>
</dbReference>
<dbReference type="PIR" id="H83469">
    <property type="entry name" value="H83469"/>
</dbReference>
<dbReference type="RefSeq" id="NP_250100.1">
    <property type="nucleotide sequence ID" value="NC_002516.2"/>
</dbReference>
<dbReference type="RefSeq" id="WP_003112424.1">
    <property type="nucleotide sequence ID" value="NZ_QZGE01000005.1"/>
</dbReference>
<dbReference type="SMR" id="Q9I3T5"/>
<dbReference type="STRING" id="208964.PA1409"/>
<dbReference type="PaxDb" id="208964-PA1409"/>
<dbReference type="DNASU" id="879295"/>
<dbReference type="GeneID" id="879295"/>
<dbReference type="KEGG" id="pae:PA1409"/>
<dbReference type="PATRIC" id="fig|208964.12.peg.1458"/>
<dbReference type="PseudoCAP" id="PA1409"/>
<dbReference type="HOGENOM" id="CLU_007727_8_3_6"/>
<dbReference type="InParanoid" id="Q9I3T5"/>
<dbReference type="OrthoDB" id="9808367at2"/>
<dbReference type="PhylomeDB" id="Q9I3T5"/>
<dbReference type="BioCyc" id="PAER208964:G1FZ6-1435-MONOMER"/>
<dbReference type="BRENDA" id="3.5.1.62">
    <property type="organism ID" value="5087"/>
</dbReference>
<dbReference type="Proteomes" id="UP000002438">
    <property type="component" value="Chromosome"/>
</dbReference>
<dbReference type="GO" id="GO:0047609">
    <property type="term" value="F:acetylputrescine deacetylase activity"/>
    <property type="evidence" value="ECO:0007669"/>
    <property type="project" value="UniProtKB-EC"/>
</dbReference>
<dbReference type="GO" id="GO:0004407">
    <property type="term" value="F:histone deacetylase activity"/>
    <property type="evidence" value="ECO:0000318"/>
    <property type="project" value="GO_Central"/>
</dbReference>
<dbReference type="GO" id="GO:0016787">
    <property type="term" value="F:hydrolase activity"/>
    <property type="evidence" value="ECO:0000314"/>
    <property type="project" value="PseudoCAP"/>
</dbReference>
<dbReference type="GO" id="GO:0046872">
    <property type="term" value="F:metal ion binding"/>
    <property type="evidence" value="ECO:0007669"/>
    <property type="project" value="UniProtKB-KW"/>
</dbReference>
<dbReference type="GO" id="GO:0040029">
    <property type="term" value="P:epigenetic regulation of gene expression"/>
    <property type="evidence" value="ECO:0000318"/>
    <property type="project" value="GO_Central"/>
</dbReference>
<dbReference type="GO" id="GO:0006595">
    <property type="term" value="P:polyamine metabolic process"/>
    <property type="evidence" value="ECO:0000314"/>
    <property type="project" value="PseudoCAP"/>
</dbReference>
<dbReference type="CDD" id="cd10001">
    <property type="entry name" value="HDAC_classII_APAH"/>
    <property type="match status" value="1"/>
</dbReference>
<dbReference type="FunFam" id="3.40.800.20:FF:000032">
    <property type="entry name" value="Acetylpolyamine amidohydrolase 2"/>
    <property type="match status" value="1"/>
</dbReference>
<dbReference type="Gene3D" id="3.40.800.20">
    <property type="entry name" value="Histone deacetylase domain"/>
    <property type="match status" value="1"/>
</dbReference>
<dbReference type="InterPro" id="IPR050284">
    <property type="entry name" value="HDAC_PDAC"/>
</dbReference>
<dbReference type="InterPro" id="IPR000286">
    <property type="entry name" value="His_deacetylse"/>
</dbReference>
<dbReference type="InterPro" id="IPR023801">
    <property type="entry name" value="His_deacetylse_dom"/>
</dbReference>
<dbReference type="InterPro" id="IPR037138">
    <property type="entry name" value="His_deacetylse_dom_sf"/>
</dbReference>
<dbReference type="InterPro" id="IPR023696">
    <property type="entry name" value="Ureohydrolase_dom_sf"/>
</dbReference>
<dbReference type="PANTHER" id="PTHR10625:SF17">
    <property type="entry name" value="HISTONE DEACETYLASE 8"/>
    <property type="match status" value="1"/>
</dbReference>
<dbReference type="PANTHER" id="PTHR10625">
    <property type="entry name" value="HISTONE DEACETYLASE HDAC1-RELATED"/>
    <property type="match status" value="1"/>
</dbReference>
<dbReference type="Pfam" id="PF00850">
    <property type="entry name" value="Hist_deacetyl"/>
    <property type="match status" value="1"/>
</dbReference>
<dbReference type="PRINTS" id="PR01270">
    <property type="entry name" value="HDASUPER"/>
</dbReference>
<dbReference type="SUPFAM" id="SSF52768">
    <property type="entry name" value="Arginase/deacetylase"/>
    <property type="match status" value="1"/>
</dbReference>
<evidence type="ECO:0000250" key="1">
    <source>
        <dbReference type="UniProtKB" id="Q48935"/>
    </source>
</evidence>
<evidence type="ECO:0000269" key="2">
    <source>
    </source>
</evidence>
<evidence type="ECO:0000269" key="3">
    <source>
    </source>
</evidence>
<evidence type="ECO:0000303" key="4">
    <source>
    </source>
</evidence>
<evidence type="ECO:0000303" key="5">
    <source>
    </source>
</evidence>
<evidence type="ECO:0000305" key="6"/>
<evidence type="ECO:0000305" key="7">
    <source>
    </source>
</evidence>
<evidence type="ECO:0000305" key="8">
    <source>
    </source>
</evidence>
<evidence type="ECO:0000312" key="9">
    <source>
        <dbReference type="EMBL" id="AAG04798.1"/>
    </source>
</evidence>
<gene>
    <name evidence="4 9" type="primary">aphA</name>
    <name evidence="9" type="ordered locus">PA1409</name>
</gene>